<evidence type="ECO:0000250" key="1"/>
<evidence type="ECO:0000255" key="2"/>
<evidence type="ECO:0000305" key="3"/>
<comment type="function">
    <text evidence="1">The key enzymatic reactions in nitrogen fixation are catalyzed by the nitrogenase complex, which has 2 components: the iron protein and the molybdenum-iron protein.</text>
</comment>
<comment type="catalytic activity">
    <reaction>
        <text>N2 + 8 reduced [2Fe-2S]-[ferredoxin] + 16 ATP + 16 H2O = H2 + 8 oxidized [2Fe-2S]-[ferredoxin] + 2 NH4(+) + 16 ADP + 16 phosphate + 6 H(+)</text>
        <dbReference type="Rhea" id="RHEA:21448"/>
        <dbReference type="Rhea" id="RHEA-COMP:10000"/>
        <dbReference type="Rhea" id="RHEA-COMP:10001"/>
        <dbReference type="ChEBI" id="CHEBI:15377"/>
        <dbReference type="ChEBI" id="CHEBI:15378"/>
        <dbReference type="ChEBI" id="CHEBI:17997"/>
        <dbReference type="ChEBI" id="CHEBI:18276"/>
        <dbReference type="ChEBI" id="CHEBI:28938"/>
        <dbReference type="ChEBI" id="CHEBI:30616"/>
        <dbReference type="ChEBI" id="CHEBI:33737"/>
        <dbReference type="ChEBI" id="CHEBI:33738"/>
        <dbReference type="ChEBI" id="CHEBI:43474"/>
        <dbReference type="ChEBI" id="CHEBI:456216"/>
        <dbReference type="EC" id="1.18.6.1"/>
    </reaction>
</comment>
<comment type="cofactor">
    <cofactor evidence="1">
        <name>[4Fe-4S] cluster</name>
        <dbReference type="ChEBI" id="CHEBI:49883"/>
    </cofactor>
    <text evidence="1">Binds 1 [4Fe-4S] cluster per dimer.</text>
</comment>
<comment type="subunit">
    <text evidence="1">Homodimer.</text>
</comment>
<comment type="PTM">
    <text evidence="1">The reversible ADP-ribosylation of Arg-99 inactivates the nitrogenase reductase and regulates nitrogenase activity.</text>
</comment>
<comment type="similarity">
    <text evidence="3">Belongs to the NifH/BchL/ChlL family.</text>
</comment>
<name>NIFH_FRASE</name>
<accession>Q47922</accession>
<dbReference type="EC" id="1.18.6.1"/>
<dbReference type="EMBL" id="U53362">
    <property type="protein sequence ID" value="AAC18640.1"/>
    <property type="molecule type" value="Genomic_DNA"/>
</dbReference>
<dbReference type="SMR" id="Q47922"/>
<dbReference type="GO" id="GO:0051539">
    <property type="term" value="F:4 iron, 4 sulfur cluster binding"/>
    <property type="evidence" value="ECO:0007669"/>
    <property type="project" value="UniProtKB-KW"/>
</dbReference>
<dbReference type="GO" id="GO:0005524">
    <property type="term" value="F:ATP binding"/>
    <property type="evidence" value="ECO:0007669"/>
    <property type="project" value="UniProtKB-UniRule"/>
</dbReference>
<dbReference type="GO" id="GO:0046872">
    <property type="term" value="F:metal ion binding"/>
    <property type="evidence" value="ECO:0007669"/>
    <property type="project" value="UniProtKB-KW"/>
</dbReference>
<dbReference type="GO" id="GO:0016163">
    <property type="term" value="F:nitrogenase activity"/>
    <property type="evidence" value="ECO:0007669"/>
    <property type="project" value="UniProtKB-UniRule"/>
</dbReference>
<dbReference type="GO" id="GO:0009399">
    <property type="term" value="P:nitrogen fixation"/>
    <property type="evidence" value="ECO:0007669"/>
    <property type="project" value="UniProtKB-UniRule"/>
</dbReference>
<dbReference type="CDD" id="cd02040">
    <property type="entry name" value="NifH"/>
    <property type="match status" value="1"/>
</dbReference>
<dbReference type="FunFam" id="3.40.50.300:FF:001379">
    <property type="entry name" value="Nitrogenase iron protein 1"/>
    <property type="match status" value="1"/>
</dbReference>
<dbReference type="Gene3D" id="3.40.50.300">
    <property type="entry name" value="P-loop containing nucleotide triphosphate hydrolases"/>
    <property type="match status" value="1"/>
</dbReference>
<dbReference type="HAMAP" id="MF_00533">
    <property type="entry name" value="NifH"/>
    <property type="match status" value="1"/>
</dbReference>
<dbReference type="InterPro" id="IPR030655">
    <property type="entry name" value="NifH/chlL_CS"/>
</dbReference>
<dbReference type="InterPro" id="IPR000392">
    <property type="entry name" value="NifH/frxC"/>
</dbReference>
<dbReference type="InterPro" id="IPR005977">
    <property type="entry name" value="Nitrogenase_Fe_NifH"/>
</dbReference>
<dbReference type="InterPro" id="IPR027417">
    <property type="entry name" value="P-loop_NTPase"/>
</dbReference>
<dbReference type="NCBIfam" id="TIGR01287">
    <property type="entry name" value="nifH"/>
    <property type="match status" value="1"/>
</dbReference>
<dbReference type="PANTHER" id="PTHR42864">
    <property type="entry name" value="LIGHT-INDEPENDENT PROTOCHLOROPHYLLIDE REDUCTASE IRON-SULFUR ATP-BINDING PROTEIN"/>
    <property type="match status" value="1"/>
</dbReference>
<dbReference type="PANTHER" id="PTHR42864:SF2">
    <property type="entry name" value="LIGHT-INDEPENDENT PROTOCHLOROPHYLLIDE REDUCTASE IRON-SULFUR ATP-BINDING PROTEIN"/>
    <property type="match status" value="1"/>
</dbReference>
<dbReference type="Pfam" id="PF00142">
    <property type="entry name" value="Fer4_NifH"/>
    <property type="match status" value="1"/>
</dbReference>
<dbReference type="PIRSF" id="PIRSF000363">
    <property type="entry name" value="Nitrogenase_iron"/>
    <property type="match status" value="1"/>
</dbReference>
<dbReference type="PRINTS" id="PR00091">
    <property type="entry name" value="NITROGNASEII"/>
</dbReference>
<dbReference type="SUPFAM" id="SSF52540">
    <property type="entry name" value="P-loop containing nucleoside triphosphate hydrolases"/>
    <property type="match status" value="1"/>
</dbReference>
<dbReference type="PROSITE" id="PS00746">
    <property type="entry name" value="NIFH_FRXC_1"/>
    <property type="match status" value="1"/>
</dbReference>
<dbReference type="PROSITE" id="PS00692">
    <property type="entry name" value="NIFH_FRXC_2"/>
    <property type="match status" value="1"/>
</dbReference>
<dbReference type="PROSITE" id="PS51026">
    <property type="entry name" value="NIFH_FRXC_3"/>
    <property type="match status" value="1"/>
</dbReference>
<reference key="1">
    <citation type="journal article" date="1997" name="Physiol. Plantarum">
        <title>Nucleotide sequence and expression of nifHD from Frankia strain EuIK1, a symbiont of Elaeagnus umbellata.</title>
        <authorList>
            <person name="Kim H.B."/>
            <person name="An C.S."/>
        </authorList>
    </citation>
    <scope>NUCLEOTIDE SEQUENCE [GENOMIC DNA]</scope>
</reference>
<protein>
    <recommendedName>
        <fullName>Nitrogenase iron protein</fullName>
        <ecNumber>1.18.6.1</ecNumber>
    </recommendedName>
    <alternativeName>
        <fullName>Nitrogenase Fe protein</fullName>
    </alternativeName>
    <alternativeName>
        <fullName>Nitrogenase component II</fullName>
    </alternativeName>
    <alternativeName>
        <fullName>Nitrogenase reductase</fullName>
    </alternativeName>
</protein>
<gene>
    <name type="primary">nifH</name>
</gene>
<feature type="chain" id="PRO_0000139508" description="Nitrogenase iron protein">
    <location>
        <begin position="1"/>
        <end position="287"/>
    </location>
</feature>
<feature type="binding site" evidence="2">
    <location>
        <begin position="8"/>
        <end position="15"/>
    </location>
    <ligand>
        <name>ATP</name>
        <dbReference type="ChEBI" id="CHEBI:30616"/>
    </ligand>
</feature>
<feature type="binding site" evidence="1">
    <location>
        <position position="96"/>
    </location>
    <ligand>
        <name>[4Fe-4S] cluster</name>
        <dbReference type="ChEBI" id="CHEBI:49883"/>
        <note>ligand shared between dimeric partners</note>
    </ligand>
</feature>
<feature type="binding site" evidence="1">
    <location>
        <position position="130"/>
    </location>
    <ligand>
        <name>[4Fe-4S] cluster</name>
        <dbReference type="ChEBI" id="CHEBI:49883"/>
        <note>ligand shared between dimeric partners</note>
    </ligand>
</feature>
<feature type="modified residue" description="ADP-ribosylarginine; by dinitrogenase reductase ADP-ribosyltransferase" evidence="1">
    <location>
        <position position="99"/>
    </location>
</feature>
<keyword id="KW-0004">4Fe-4S</keyword>
<keyword id="KW-0013">ADP-ribosylation</keyword>
<keyword id="KW-0067">ATP-binding</keyword>
<keyword id="KW-0408">Iron</keyword>
<keyword id="KW-0411">Iron-sulfur</keyword>
<keyword id="KW-0479">Metal-binding</keyword>
<keyword id="KW-0535">Nitrogen fixation</keyword>
<keyword id="KW-0547">Nucleotide-binding</keyword>
<keyword id="KW-0560">Oxidoreductase</keyword>
<sequence>MRQIAFYGKGGIGKSTTQQNTMAAMAEMGRRVMIVGCDPKADSTRLILHSKAQTSVIKLAAEKGSVEDLELNEVLVEGQWGIKCVESGGPEPGVGCAGRGVITSITYLEEAGAYENLDFVTYDVLGDVVCGGFAMPIRQGKAQEIYIVTSGEMMAMYAANNIARGVLKYGHSGGVRLGGLICNSRNTDREDELIIELARRLNTQMIHFIPRNNVVQHAEVRRMTVIEYDPQNSQANEYRQLAKKIDNNEMKTIPTPIRMDELEELLIEFGIMEQEDESIIAKANATS</sequence>
<proteinExistence type="inferred from homology"/>
<organism>
    <name type="scientific">Frankia sp. (strain EuIK1)</name>
    <dbReference type="NCBI Taxonomy" id="47227"/>
    <lineage>
        <taxon>Bacteria</taxon>
        <taxon>Bacillati</taxon>
        <taxon>Actinomycetota</taxon>
        <taxon>Actinomycetes</taxon>
        <taxon>Frankiales</taxon>
        <taxon>Frankiaceae</taxon>
        <taxon>Frankia</taxon>
    </lineage>
</organism>